<feature type="chain" id="PRO_0000057701" description="Intracellular exo-alpha-(1-&gt;5)-L-arabinofuranosidase 1">
    <location>
        <begin position="1"/>
        <end position="500"/>
    </location>
</feature>
<feature type="active site" description="Proton donor/acceptor" evidence="1">
    <location>
        <position position="173"/>
    </location>
</feature>
<feature type="active site" description="Nucleophile" evidence="1">
    <location>
        <position position="292"/>
    </location>
</feature>
<feature type="binding site" evidence="1">
    <location>
        <position position="27"/>
    </location>
    <ligand>
        <name>alpha-L-arabinofuranose</name>
        <dbReference type="ChEBI" id="CHEBI:28772"/>
    </ligand>
</feature>
<feature type="binding site" evidence="1">
    <location>
        <position position="72"/>
    </location>
    <ligand>
        <name>alpha-L-arabinofuranose</name>
        <dbReference type="ChEBI" id="CHEBI:28772"/>
    </ligand>
</feature>
<feature type="binding site" evidence="1">
    <location>
        <position position="172"/>
    </location>
    <ligand>
        <name>alpha-L-arabinofuranose</name>
        <dbReference type="ChEBI" id="CHEBI:28772"/>
    </ligand>
</feature>
<feature type="binding site" evidence="1">
    <location>
        <position position="244"/>
    </location>
    <ligand>
        <name>alpha-L-arabinofuranose</name>
        <dbReference type="ChEBI" id="CHEBI:28772"/>
    </ligand>
</feature>
<feature type="binding site" description="covalent" evidence="1">
    <location>
        <position position="292"/>
    </location>
    <ligand>
        <name>alpha-L-arabinofuranose</name>
        <dbReference type="ChEBI" id="CHEBI:28772"/>
    </ligand>
</feature>
<feature type="binding site" evidence="1">
    <location>
        <position position="349"/>
    </location>
    <ligand>
        <name>alpha-L-arabinofuranose</name>
        <dbReference type="ChEBI" id="CHEBI:28772"/>
    </ligand>
</feature>
<feature type="site" description="Important for substrate recognition" evidence="1">
    <location>
        <position position="296"/>
    </location>
</feature>
<feature type="site" description="Important for substrate recognition" evidence="1">
    <location>
        <position position="349"/>
    </location>
</feature>
<feature type="sequence conflict" description="In Ref. 2; CAA99595." evidence="7" ref="2">
    <original>A</original>
    <variation>P</variation>
    <location>
        <position position="114"/>
    </location>
</feature>
<reference key="1">
    <citation type="journal article" date="1997" name="Microbiology">
        <title>The Bacillus subtilis L-arabinose (ara) operon: nucleotide sequence, genetic organization and expression.</title>
        <authorList>
            <person name="Sa-Nogueira I.M.G."/>
            <person name="Nogueira T.V."/>
            <person name="Soares S."/>
            <person name="de Lencastre H."/>
        </authorList>
    </citation>
    <scope>NUCLEOTIDE SEQUENCE [GENOMIC DNA]</scope>
    <source>
        <strain>168</strain>
    </source>
</reference>
<reference key="2">
    <citation type="journal article" date="1996" name="Microbiology">
        <title>The dnaB-pheA (256 degrees-240 degrees) region of the Bacillus subtilis chromosome containing genes responsible for stress responses, the utilization of plant cell walls and primary metabolism.</title>
        <authorList>
            <person name="Wipat A."/>
            <person name="Carter N."/>
            <person name="Brignell C.S."/>
            <person name="Guy J.B."/>
            <person name="Piper K."/>
            <person name="Sanders J."/>
            <person name="Emmerson P.T."/>
            <person name="Harwood C.R."/>
        </authorList>
    </citation>
    <scope>NUCLEOTIDE SEQUENCE [GENOMIC DNA]</scope>
    <source>
        <strain>168</strain>
    </source>
</reference>
<reference key="3">
    <citation type="journal article" date="1997" name="Nature">
        <title>The complete genome sequence of the Gram-positive bacterium Bacillus subtilis.</title>
        <authorList>
            <person name="Kunst F."/>
            <person name="Ogasawara N."/>
            <person name="Moszer I."/>
            <person name="Albertini A.M."/>
            <person name="Alloni G."/>
            <person name="Azevedo V."/>
            <person name="Bertero M.G."/>
            <person name="Bessieres P."/>
            <person name="Bolotin A."/>
            <person name="Borchert S."/>
            <person name="Borriss R."/>
            <person name="Boursier L."/>
            <person name="Brans A."/>
            <person name="Braun M."/>
            <person name="Brignell S.C."/>
            <person name="Bron S."/>
            <person name="Brouillet S."/>
            <person name="Bruschi C.V."/>
            <person name="Caldwell B."/>
            <person name="Capuano V."/>
            <person name="Carter N.M."/>
            <person name="Choi S.-K."/>
            <person name="Codani J.-J."/>
            <person name="Connerton I.F."/>
            <person name="Cummings N.J."/>
            <person name="Daniel R.A."/>
            <person name="Denizot F."/>
            <person name="Devine K.M."/>
            <person name="Duesterhoeft A."/>
            <person name="Ehrlich S.D."/>
            <person name="Emmerson P.T."/>
            <person name="Entian K.-D."/>
            <person name="Errington J."/>
            <person name="Fabret C."/>
            <person name="Ferrari E."/>
            <person name="Foulger D."/>
            <person name="Fritz C."/>
            <person name="Fujita M."/>
            <person name="Fujita Y."/>
            <person name="Fuma S."/>
            <person name="Galizzi A."/>
            <person name="Galleron N."/>
            <person name="Ghim S.-Y."/>
            <person name="Glaser P."/>
            <person name="Goffeau A."/>
            <person name="Golightly E.J."/>
            <person name="Grandi G."/>
            <person name="Guiseppi G."/>
            <person name="Guy B.J."/>
            <person name="Haga K."/>
            <person name="Haiech J."/>
            <person name="Harwood C.R."/>
            <person name="Henaut A."/>
            <person name="Hilbert H."/>
            <person name="Holsappel S."/>
            <person name="Hosono S."/>
            <person name="Hullo M.-F."/>
            <person name="Itaya M."/>
            <person name="Jones L.-M."/>
            <person name="Joris B."/>
            <person name="Karamata D."/>
            <person name="Kasahara Y."/>
            <person name="Klaerr-Blanchard M."/>
            <person name="Klein C."/>
            <person name="Kobayashi Y."/>
            <person name="Koetter P."/>
            <person name="Koningstein G."/>
            <person name="Krogh S."/>
            <person name="Kumano M."/>
            <person name="Kurita K."/>
            <person name="Lapidus A."/>
            <person name="Lardinois S."/>
            <person name="Lauber J."/>
            <person name="Lazarevic V."/>
            <person name="Lee S.-M."/>
            <person name="Levine A."/>
            <person name="Liu H."/>
            <person name="Masuda S."/>
            <person name="Mauel C."/>
            <person name="Medigue C."/>
            <person name="Medina N."/>
            <person name="Mellado R.P."/>
            <person name="Mizuno M."/>
            <person name="Moestl D."/>
            <person name="Nakai S."/>
            <person name="Noback M."/>
            <person name="Noone D."/>
            <person name="O'Reilly M."/>
            <person name="Ogawa K."/>
            <person name="Ogiwara A."/>
            <person name="Oudega B."/>
            <person name="Park S.-H."/>
            <person name="Parro V."/>
            <person name="Pohl T.M."/>
            <person name="Portetelle D."/>
            <person name="Porwollik S."/>
            <person name="Prescott A.M."/>
            <person name="Presecan E."/>
            <person name="Pujic P."/>
            <person name="Purnelle B."/>
            <person name="Rapoport G."/>
            <person name="Rey M."/>
            <person name="Reynolds S."/>
            <person name="Rieger M."/>
            <person name="Rivolta C."/>
            <person name="Rocha E."/>
            <person name="Roche B."/>
            <person name="Rose M."/>
            <person name="Sadaie Y."/>
            <person name="Sato T."/>
            <person name="Scanlan E."/>
            <person name="Schleich S."/>
            <person name="Schroeter R."/>
            <person name="Scoffone F."/>
            <person name="Sekiguchi J."/>
            <person name="Sekowska A."/>
            <person name="Seror S.J."/>
            <person name="Serror P."/>
            <person name="Shin B.-S."/>
            <person name="Soldo B."/>
            <person name="Sorokin A."/>
            <person name="Tacconi E."/>
            <person name="Takagi T."/>
            <person name="Takahashi H."/>
            <person name="Takemaru K."/>
            <person name="Takeuchi M."/>
            <person name="Tamakoshi A."/>
            <person name="Tanaka T."/>
            <person name="Terpstra P."/>
            <person name="Tognoni A."/>
            <person name="Tosato V."/>
            <person name="Uchiyama S."/>
            <person name="Vandenbol M."/>
            <person name="Vannier F."/>
            <person name="Vassarotti A."/>
            <person name="Viari A."/>
            <person name="Wambutt R."/>
            <person name="Wedler E."/>
            <person name="Wedler H."/>
            <person name="Weitzenegger T."/>
            <person name="Winters P."/>
            <person name="Wipat A."/>
            <person name="Yamamoto H."/>
            <person name="Yamane K."/>
            <person name="Yasumoto K."/>
            <person name="Yata K."/>
            <person name="Yoshida K."/>
            <person name="Yoshikawa H.-F."/>
            <person name="Zumstein E."/>
            <person name="Yoshikawa H."/>
            <person name="Danchin A."/>
        </authorList>
    </citation>
    <scope>NUCLEOTIDE SEQUENCE [LARGE SCALE GENOMIC DNA]</scope>
    <source>
        <strain>168</strain>
    </source>
</reference>
<reference key="4">
    <citation type="journal article" date="2009" name="Microbiology">
        <title>From a consortium sequence to a unified sequence: the Bacillus subtilis 168 reference genome a decade later.</title>
        <authorList>
            <person name="Barbe V."/>
            <person name="Cruveiller S."/>
            <person name="Kunst F."/>
            <person name="Lenoble P."/>
            <person name="Meurice G."/>
            <person name="Sekowska A."/>
            <person name="Vallenet D."/>
            <person name="Wang T."/>
            <person name="Moszer I."/>
            <person name="Medigue C."/>
            <person name="Danchin A."/>
        </authorList>
    </citation>
    <scope>SEQUENCE REVISION TO 114</scope>
</reference>
<reference key="5">
    <citation type="journal article" date="1999" name="Mol. Microbiol.">
        <title>Mode of action of AraR, the key regulator of L-arabinose metabolism in Bacillus subtilis.</title>
        <authorList>
            <person name="Mota L.J."/>
            <person name="Tavares P."/>
            <person name="Sa-Nogueira I.M.G."/>
        </authorList>
    </citation>
    <scope>TRANSCRIPTIONAL REGULATION</scope>
</reference>
<reference key="6">
    <citation type="journal article" date="2004" name="J. Bacteriol.">
        <title>Transcriptional regulation of genes encoding arabinan-degrading enzymes in Bacillus subtilis.</title>
        <authorList>
            <person name="Raposo M.P."/>
            <person name="Inacio J.M."/>
            <person name="Mota L.J."/>
            <person name="de Sa-Nogueira I."/>
        </authorList>
    </citation>
    <scope>INDUCTION</scope>
    <source>
        <strain>168</strain>
    </source>
</reference>
<reference key="7">
    <citation type="journal article" date="2008" name="Microbiology">
        <title>Two distinct arabinofuranosidases contribute to arabino-oligosaccharide degradation in Bacillus subtilis.</title>
        <authorList>
            <person name="Inacio J.M."/>
            <person name="Correia I.L."/>
            <person name="de Sa-Nogueira I."/>
        </authorList>
    </citation>
    <scope>FUNCTION</scope>
    <scope>CATALYTIC ACTIVITY</scope>
    <scope>SUBCELLULAR LOCATION</scope>
    <scope>BIOPHYSICOCHEMICAL PROPERTIES</scope>
    <scope>SUBSTRATE SPECIFICITY</scope>
    <scope>DISRUPTION PHENOTYPE</scope>
    <scope>SUBUNIT</scope>
</reference>
<reference key="8">
    <citation type="journal article" date="2024" name="Arch. Microbiol.">
        <title>Molecular cloning, expression, purification, and characterization of Bacillus subtilis hydrolyzed ginsenoside Rc of alpha-L-arabinofuranosidase in Escherichia coli.</title>
        <authorList>
            <person name="Zhu L."/>
            <person name="Wang Y."/>
            <person name="Cai J."/>
        </authorList>
    </citation>
    <scope>FUNCTION</scope>
    <scope>CATALYTIC ACTIVITY</scope>
    <scope>BIOPHYSICOCHEMICAL PROPERTIES</scope>
    <scope>ACTIVITY REGULATION</scope>
</reference>
<dbReference type="EC" id="3.2.1.55" evidence="2"/>
<dbReference type="EMBL" id="X89810">
    <property type="protein sequence ID" value="CAA61937.1"/>
    <property type="molecule type" value="Genomic_DNA"/>
</dbReference>
<dbReference type="EMBL" id="Z75208">
    <property type="protein sequence ID" value="CAA99595.1"/>
    <property type="molecule type" value="Genomic_DNA"/>
</dbReference>
<dbReference type="EMBL" id="AL009126">
    <property type="protein sequence ID" value="CAB14832.2"/>
    <property type="molecule type" value="Genomic_DNA"/>
</dbReference>
<dbReference type="PIR" id="C69580">
    <property type="entry name" value="C69580"/>
</dbReference>
<dbReference type="RefSeq" id="NP_390750.2">
    <property type="nucleotide sequence ID" value="NC_000964.3"/>
</dbReference>
<dbReference type="RefSeq" id="WP_004398747.1">
    <property type="nucleotide sequence ID" value="NZ_OZ025638.1"/>
</dbReference>
<dbReference type="SMR" id="P94531"/>
<dbReference type="FunCoup" id="P94531">
    <property type="interactions" value="103"/>
</dbReference>
<dbReference type="STRING" id="224308.BSU28720"/>
<dbReference type="CAZy" id="GH51">
    <property type="family name" value="Glycoside Hydrolase Family 51"/>
</dbReference>
<dbReference type="PaxDb" id="224308-BSU28720"/>
<dbReference type="EnsemblBacteria" id="CAB14832">
    <property type="protein sequence ID" value="CAB14832"/>
    <property type="gene ID" value="BSU_28720"/>
</dbReference>
<dbReference type="GeneID" id="937509"/>
<dbReference type="KEGG" id="bsu:BSU28720"/>
<dbReference type="PATRIC" id="fig|224308.179.peg.3120"/>
<dbReference type="eggNOG" id="COG3534">
    <property type="taxonomic scope" value="Bacteria"/>
</dbReference>
<dbReference type="InParanoid" id="P94531"/>
<dbReference type="OrthoDB" id="9758333at2"/>
<dbReference type="PhylomeDB" id="P94531"/>
<dbReference type="BioCyc" id="BSUB:BSU28720-MONOMER"/>
<dbReference type="BioCyc" id="MetaCyc:BSU28720-MONOMER"/>
<dbReference type="BRENDA" id="3.2.1.55">
    <property type="organism ID" value="658"/>
</dbReference>
<dbReference type="SABIO-RK" id="P94531"/>
<dbReference type="UniPathway" id="UPA00667"/>
<dbReference type="Proteomes" id="UP000001570">
    <property type="component" value="Chromosome"/>
</dbReference>
<dbReference type="GO" id="GO:0005737">
    <property type="term" value="C:cytoplasm"/>
    <property type="evidence" value="ECO:0007669"/>
    <property type="project" value="UniProtKB-SubCell"/>
</dbReference>
<dbReference type="GO" id="GO:0046556">
    <property type="term" value="F:alpha-L-arabinofuranosidase activity"/>
    <property type="evidence" value="ECO:0007669"/>
    <property type="project" value="UniProtKB-EC"/>
</dbReference>
<dbReference type="GO" id="GO:0031222">
    <property type="term" value="P:arabinan catabolic process"/>
    <property type="evidence" value="ECO:0007669"/>
    <property type="project" value="UniProtKB-UniPathway"/>
</dbReference>
<dbReference type="GO" id="GO:0046373">
    <property type="term" value="P:L-arabinose metabolic process"/>
    <property type="evidence" value="ECO:0007669"/>
    <property type="project" value="InterPro"/>
</dbReference>
<dbReference type="GO" id="GO:0000272">
    <property type="term" value="P:polysaccharide catabolic process"/>
    <property type="evidence" value="ECO:0000318"/>
    <property type="project" value="GO_Central"/>
</dbReference>
<dbReference type="Gene3D" id="3.20.20.80">
    <property type="entry name" value="Glycosidases"/>
    <property type="match status" value="1"/>
</dbReference>
<dbReference type="Gene3D" id="2.60.40.1180">
    <property type="entry name" value="Golgi alpha-mannosidase II"/>
    <property type="match status" value="1"/>
</dbReference>
<dbReference type="InterPro" id="IPR010720">
    <property type="entry name" value="Alpha-L-AF_C"/>
</dbReference>
<dbReference type="InterPro" id="IPR013780">
    <property type="entry name" value="Glyco_hydro_b"/>
</dbReference>
<dbReference type="InterPro" id="IPR017853">
    <property type="entry name" value="Glycoside_hydrolase_SF"/>
</dbReference>
<dbReference type="PANTHER" id="PTHR43576:SF3">
    <property type="entry name" value="ALPHA-L-ARABINOFURANOSIDASE C"/>
    <property type="match status" value="1"/>
</dbReference>
<dbReference type="PANTHER" id="PTHR43576">
    <property type="entry name" value="ALPHA-L-ARABINOFURANOSIDASE C-RELATED"/>
    <property type="match status" value="1"/>
</dbReference>
<dbReference type="Pfam" id="PF06964">
    <property type="entry name" value="Alpha-L-AF_C"/>
    <property type="match status" value="1"/>
</dbReference>
<dbReference type="SMART" id="SM00813">
    <property type="entry name" value="Alpha-L-AF_C"/>
    <property type="match status" value="1"/>
</dbReference>
<dbReference type="SUPFAM" id="SSF51445">
    <property type="entry name" value="(Trans)glycosidases"/>
    <property type="match status" value="1"/>
</dbReference>
<dbReference type="SUPFAM" id="SSF51011">
    <property type="entry name" value="Glycosyl hydrolase domain"/>
    <property type="match status" value="1"/>
</dbReference>
<accession>P94531</accession>
<accession>O05096</accession>
<keyword id="KW-0119">Carbohydrate metabolism</keyword>
<keyword id="KW-0963">Cytoplasm</keyword>
<keyword id="KW-0326">Glycosidase</keyword>
<keyword id="KW-0378">Hydrolase</keyword>
<keyword id="KW-1185">Reference proteome</keyword>
<organism>
    <name type="scientific">Bacillus subtilis (strain 168)</name>
    <dbReference type="NCBI Taxonomy" id="224308"/>
    <lineage>
        <taxon>Bacteria</taxon>
        <taxon>Bacillati</taxon>
        <taxon>Bacillota</taxon>
        <taxon>Bacilli</taxon>
        <taxon>Bacillales</taxon>
        <taxon>Bacillaceae</taxon>
        <taxon>Bacillus</taxon>
    </lineage>
</organism>
<evidence type="ECO:0000250" key="1">
    <source>
        <dbReference type="UniProtKB" id="Q9XBQ3"/>
    </source>
</evidence>
<evidence type="ECO:0000269" key="2">
    <source>
    </source>
</evidence>
<evidence type="ECO:0000269" key="3">
    <source>
    </source>
</evidence>
<evidence type="ECO:0000303" key="4">
    <source>
    </source>
</evidence>
<evidence type="ECO:0000303" key="5">
    <source>
    </source>
</evidence>
<evidence type="ECO:0000303" key="6">
    <source>
    </source>
</evidence>
<evidence type="ECO:0000305" key="7"/>
<evidence type="ECO:0000305" key="8">
    <source>
    </source>
</evidence>
<evidence type="ECO:0000305" key="9">
    <source>
    </source>
</evidence>
<evidence type="ECO:0000305" key="10">
    <source>
    </source>
</evidence>
<proteinExistence type="evidence at protein level"/>
<sequence length="500" mass="57034">MKKARMIVDKEYKIGEVDKRIYGSFIEHMGRAVYEGIYEPDHPEADEDGFRKDVQSLIKELQVPIIRYPGGNFLSGYNWEDGVGPVENRPRRLDLAWQTTETNEVGTNEFLSWAKKVNTEVNMAVNLGTRGIDAARNLVEYCNHPKGSYWSDLRRSHGYEQPYGIKTWCLGNEMDGPWQIGHKTADEYGRLAAETAKVMKWVDPSIELVACGSSNSGMPTFIDWEAKVLEHTYEHVDYISLHTYYGNRDNNLPNYLARSMDLDHFIKSVAATCDYVKAKTRSKKTINLSLDEWNVWYHSNEADKKVEPWITARPILEDIYNFEDALLVGSLLITMLQHADRVKIACLAQLVNVIAPIMTEKGGEAWRQPIFYPYMHASVYGRGESLKPLISSPKYDCSDFTDVPYVDAAVVYSEEEETLTIFAVNKAEDQMETEISLRGFESYQIAEHIVLEHQDIKATNQHNRKNVVPHSNGSSSVSENGLTAHFTPLSWNVIRLKKQS</sequence>
<gene>
    <name evidence="6" type="primary">abfA</name>
    <name evidence="5" type="synonym">bsafs</name>
    <name type="ordered locus">BSU28720</name>
</gene>
<comment type="function">
    <text evidence="2 3">Involved in the degradation of arabinan and is a key enzyme in the complete degradation of the plant cell wall (PubMed:18757805). Catalyzes the cleavage of terminal alpha-(1-&gt;5)-arabinofuranosyl bonds in different hemicellulosic homopolysaccharides (branched and debranched arabinans) (PubMed:18757805). It acts preferentially on arabinotriose, arabinobiose and linear alpha-(1-&gt;5)-L-arabinan, and is much less effective on branched sugar beet arabinan (PubMed:18757805). When expressed in E.coli, the recombinant enyzme can hydrolyze, with relatively low catalytic efficiency, the terminal alpha-L-arabinofuranoside at the C20 position of ginsenoside Rc to produce ginsenoside Rd, a rare ginsenoside that exhibits diverse and powerful pharmacological activities (PubMed:38502253).</text>
</comment>
<comment type="catalytic activity">
    <reaction evidence="2 3">
        <text>Hydrolysis of terminal non-reducing alpha-L-arabinofuranoside residues in alpha-L-arabinosides.</text>
        <dbReference type="EC" id="3.2.1.55"/>
    </reaction>
</comment>
<comment type="catalytic activity">
    <reaction evidence="3">
        <text>(20S)-ginsenoside Rc + H2O = L-arabinofuranose + (20S)-ginsenoside Rd</text>
        <dbReference type="Rhea" id="RHEA:79315"/>
        <dbReference type="ChEBI" id="CHEBI:6178"/>
        <dbReference type="ChEBI" id="CHEBI:15377"/>
        <dbReference type="ChEBI" id="CHEBI:67988"/>
        <dbReference type="ChEBI" id="CHEBI:77154"/>
    </reaction>
    <physiologicalReaction direction="left-to-right" evidence="3">
        <dbReference type="Rhea" id="RHEA:79316"/>
    </physiologicalReaction>
</comment>
<comment type="activity regulation">
    <text evidence="3">At a concentration of 5 mM, K(+), Cu(2+) and Ni(2+) exhibit inhibitory effects on the activity (PubMed:38502253). Additionally, the chemical reagent SDS also displays a certain degree of inhibition (PubMed:38502253). Enzymatic activity is largely unaffected by product feedback inhibition (PubMed:38502253).</text>
</comment>
<comment type="biophysicochemical properties">
    <kinetics>
        <KM evidence="2">0.36 mM for linear alpha-1,5-L-arabinan (at pH 6.6 and 37 degrees Celsius)</KM>
        <KM evidence="2">0.49 mM for p-nitrophenyl-alpha-L-arabinofuranoside (pNP-Araf) (at pH 6.6 and 37 degrees Celsius)</KM>
        <KM evidence="3">0.74 mM for p-nitrophenyl-alpha-L-arabinofuranoside (pNP-Araf)</KM>
        <KM evidence="2">0.78 mM for arabinobiose (at pH 6.6 and 37 degrees Celsius)</KM>
        <KM evidence="2">1.1 mM for arabinotriose (at pH 6.6 and 37 degrees Celsius)</KM>
        <KM evidence="2">4.4 mM for sugar beet arabinan (branched) (at pH 6.6 and 37 degrees Celsius)</KM>
        <KM evidence="3">4.59 mM for ginsenoside Rc</KM>
        <Vmax evidence="2">317.0 umol/min/mg enzyme with pNP-Araf as substrate (at pH 6.6 and 37 degrees Celsius)</Vmax>
        <Vmax>24.0 umol/min/mg enzyme with pNP-Araf as substrate</Vmax>
        <Vmax>164.0 umol/min/mg enzyme with ginsenoside Rc as substrate</Vmax>
        <text evidence="2 3">kcat is 12 sec(-1) with linear alpha-1,5-L-arabinan as substrate (PubMed:18757805). kcat is 306 sec(-1) with pNP-Araf as substrate (PubMed:18757805). kcat is 32 sec(-1) with arabinobiose as substrate (PubMed:18757805). kcat is 88 sec(-1) with arabinotriose as substrate (PubMed:18757805). kcat is 8.2 sec(-1) with sugar beet arabinan (branched) as substrate (PubMed:18757805). kcat is 22.3 sec(-1) with pNP-Araf as substrate (PubMed:38502253). kcat is 1.58 sec(-1) with ginsenoside Rc as substrate (PubMed:38502253).</text>
    </kinetics>
    <phDependence>
        <text evidence="2 3">Optimum pH is 8 (PubMed:18757805). Optimum pH is 4.5 (at 30 degrees Celsius with pNP-Araf as substrate) (PubMed:38502253).</text>
    </phDependence>
    <temperatureDependence>
        <text evidence="2 3">Optimum temperature is 50 degrees Celsius (PubMed:18757805). Optimum temperature is 35 degrees Celsius (at pH 4.5 with pNP-Araf as substrate) (PubMed:38502253).</text>
    </temperatureDependence>
</comment>
<comment type="pathway">
    <text>Glycan metabolism; L-arabinan degradation.</text>
</comment>
<comment type="subunit">
    <text evidence="10">Homohexamer; trimer of dimers.</text>
</comment>
<comment type="subcellular location">
    <subcellularLocation>
        <location evidence="2">Cytoplasm</location>
    </subcellularLocation>
</comment>
<comment type="induction">
    <text evidence="8 9">Transcription is repressed by glucose and by the binding of AraR to the operon promoter. L-arabinose acts as an inducer by inhibiting the binding of AraR to the DNA, thus allowing expression of the gene (Probable).</text>
</comment>
<comment type="disruption phenotype">
    <text evidence="2">Cells lacking this gene retain 38% of arabinofuranosidase activity, and the double mutant abfA/abf2 is inactive.</text>
</comment>
<comment type="similarity">
    <text evidence="7">Belongs to the glycosyl hydrolase 51 family.</text>
</comment>
<name>IABF1_BACSU</name>
<protein>
    <recommendedName>
        <fullName>Intracellular exo-alpha-(1-&gt;5)-L-arabinofuranosidase 1</fullName>
        <shortName>ABF</shortName>
        <ecNumber evidence="2">3.2.1.55</ecNumber>
    </recommendedName>
    <alternativeName>
        <fullName evidence="5">Alpha-L-arabinofuranosidase</fullName>
    </alternativeName>
    <alternativeName>
        <fullName evidence="4">Arabinofuranosidase</fullName>
        <shortName evidence="4">AF</shortName>
    </alternativeName>
    <alternativeName>
        <fullName>Intracellular arabinan exo-alpha-(1-&gt;5)-L-arabinosidase</fullName>
        <shortName>Arabinosidase</shortName>
    </alternativeName>
</protein>